<organism>
    <name type="scientific">Homo sapiens</name>
    <name type="common">Human</name>
    <dbReference type="NCBI Taxonomy" id="9606"/>
    <lineage>
        <taxon>Eukaryota</taxon>
        <taxon>Metazoa</taxon>
        <taxon>Chordata</taxon>
        <taxon>Craniata</taxon>
        <taxon>Vertebrata</taxon>
        <taxon>Euteleostomi</taxon>
        <taxon>Mammalia</taxon>
        <taxon>Eutheria</taxon>
        <taxon>Euarchontoglires</taxon>
        <taxon>Primates</taxon>
        <taxon>Haplorrhini</taxon>
        <taxon>Catarrhini</taxon>
        <taxon>Hominidae</taxon>
        <taxon>Homo</taxon>
    </lineage>
</organism>
<gene>
    <name evidence="23 26" type="primary">PCK1</name>
    <name evidence="22" type="synonym">PEPCK1</name>
</gene>
<name>PCKGC_HUMAN</name>
<comment type="function">
    <text evidence="3 12 13 14 15 16">Cytosolic phosphoenolpyruvate carboxykinase that catalyzes the reversible decarboxylation and phosphorylation of oxaloacetate (OAA) and acts as the rate-limiting enzyme in gluconeogenesis (PubMed:24863970, PubMed:26971250, PubMed:28216384, PubMed:30193097). Regulates cataplerosis and anaplerosis, the processes that control the levels of metabolic intermediates in the citric acid cycle (PubMed:24863970, PubMed:26971250, PubMed:28216384, PubMed:30193097). At low glucose levels, it catalyzes the cataplerotic conversion of oxaloacetate to phosphoenolpyruvate (PEP), the rate-limiting step in the metabolic pathway that produces glucose from lactate and other precursors derived from the citric acid cycle (PubMed:30193097). At high glucose levels, it catalyzes the anaplerotic conversion of phosphoenolpyruvate to oxaloacetate (PubMed:30193097). Acts as a regulator of formation and maintenance of memory CD8(+) T-cells: up-regulated in these cells, where it generates phosphoenolpyruvate, via gluconeogenesis (By similarity). The resultant phosphoenolpyruvate flows to glycogen and pentose phosphate pathway, which is essential for memory CD8(+) T-cells homeostasis (By similarity). In addition to the phosphoenolpyruvate carboxykinase activity, also acts as a protein kinase when phosphorylated at Ser-90: phosphorylation at Ser-90 by AKT1 reduces the binding affinity to oxaloacetate and promotes an atypical serine protein kinase activity using GTP as donor (PubMed:32322062). The protein kinase activity regulates lipogenesis: upon phosphorylation at Ser-90, translocates to the endoplasmic reticulum and catalyzes phosphorylation of INSIG proteins (INSIG1 and INSIG2), thereby disrupting the interaction between INSIG proteins and SCAP and promoting nuclear translocation of SREBP proteins (SREBF1/SREBP1 or SREBF2/SREBP2) and subsequent transcription of downstream lipogenesis-related genes (PubMed:32322062).</text>
</comment>
<comment type="catalytic activity">
    <reaction evidence="12 13 14 15 16">
        <text>oxaloacetate + GTP = phosphoenolpyruvate + GDP + CO2</text>
        <dbReference type="Rhea" id="RHEA:10388"/>
        <dbReference type="ChEBI" id="CHEBI:16452"/>
        <dbReference type="ChEBI" id="CHEBI:16526"/>
        <dbReference type="ChEBI" id="CHEBI:37565"/>
        <dbReference type="ChEBI" id="CHEBI:58189"/>
        <dbReference type="ChEBI" id="CHEBI:58702"/>
        <dbReference type="EC" id="4.1.1.32"/>
    </reaction>
    <physiologicalReaction direction="left-to-right" evidence="15">
        <dbReference type="Rhea" id="RHEA:10389"/>
    </physiologicalReaction>
    <physiologicalReaction direction="right-to-left" evidence="15">
        <dbReference type="Rhea" id="RHEA:10390"/>
    </physiologicalReaction>
</comment>
<comment type="catalytic activity">
    <reaction evidence="16">
        <text>L-seryl-[protein] + GTP = O-phospho-L-seryl-[protein] + GDP + H(+)</text>
        <dbReference type="Rhea" id="RHEA:64020"/>
        <dbReference type="Rhea" id="RHEA-COMP:9863"/>
        <dbReference type="Rhea" id="RHEA-COMP:11604"/>
        <dbReference type="ChEBI" id="CHEBI:15378"/>
        <dbReference type="ChEBI" id="CHEBI:29999"/>
        <dbReference type="ChEBI" id="CHEBI:37565"/>
        <dbReference type="ChEBI" id="CHEBI:58189"/>
        <dbReference type="ChEBI" id="CHEBI:83421"/>
    </reaction>
    <physiologicalReaction direction="left-to-right" evidence="16">
        <dbReference type="Rhea" id="RHEA:64021"/>
    </physiologicalReaction>
</comment>
<comment type="cofactor">
    <cofactor evidence="4 5 9">
        <name>Mn(2+)</name>
        <dbReference type="ChEBI" id="CHEBI:29035"/>
    </cofactor>
    <text evidence="4 5 9">Binds 1 Mn(2+) ion per subunit.</text>
</comment>
<comment type="activity regulation">
    <text evidence="1 10 15 16">Phosphoenolpyruvate carboxykinase activity is regulated by acetylation and glucose levels (PubMed:20167786, PubMed:30193097). The anaplerotic conversion of phosphoenolpyruvate to oxaloacetate is improved by PCK1 acetylation on Lys-91 (K91ac), Lys-473 (K473ac) and Lys-521 (K521ac) (By similarity). High glucose concentrations favor PCK1 anaplerotic activity by triggering acetylation on Lys-91 (K91ac). At low glucose levels, SIRT1-mediated deacetylation of Lys-91 promotes the cataplerotic conversion of oxaloacetate to phosphoenolpyruvate (PubMed:30193097). Phosphorylation at Ser-90 reduces the binding affinity to oxaloacetate and converts the enzyme into an atypical protein kinase using GTP as donor (PubMed:32322062).</text>
</comment>
<comment type="biophysicochemical properties">
    <kinetics>
        <KM evidence="15">35 uM for oxaloacetate (for the enzyme purified from cells exposed to 10 mM glucose)</KM>
        <KM evidence="15">46 uM for oxaloacetate (for the enzyme purified from cells exposed to 15 mM glucose)</KM>
        <KM evidence="15">170 uM for GTP (for the enzyme purified from cells exposed to 10 mM glucose)</KM>
        <KM evidence="15">151 uM for GTP (for the enzyme purified from cells exposed to 15 mM glucose)</KM>
        <KM evidence="15">208 uM for phosphoenolpyruvate (for the enzyme purified from cells exposed to 10 mM glucose)</KM>
        <KM evidence="15">87 uM for phosphoenolpyruvate (for the enzyme purified from cells exposed to 15 mM glucose)</KM>
        <KM evidence="15">63 uM for GDP (for the enzyme purified from cells exposed to 10 mM glucose)</KM>
        <KM evidence="15">29 uM for GDP (for the enzyme purified from cells exposed to 15 mM glucose)</KM>
        <KM evidence="16">1.15 mM for GTP (in a protein kinase activity assay when not phosphorylated at Ser-90)</KM>
        <KM evidence="16">0.21 mM for GTP (in a protein kinase activity assay when using a phosphomimetic mutant at Ser-90)</KM>
        <text evidence="15">kcat is 33 sec(-1) with oxaloacetate as substrate (for the enzyme purified from cells exposed to 10 mM glucose) (PubMed:30193097). kcat is 21 sec(-1) with oxaloacetate as substrate (for the enzyme purified from cells exposed to 15 mM glucose) (PubMed:30193097). kcat is 17 sec(-1) with phosphoenolpyruvate as substrate (for the enzyme purified from cells exposed to 10 mM glucose) (PubMed:30193097). kcat is 11 sec(-1)with phosphoenolpyruvate as substrate (for the enzyme purified from cells exposed to 15 mM glucose) (PubMed:30193097). kcat is 40 sec(-1) with GTP as substrate (for the enzyme purified from cells exposed to 10 mM glucose) (PubMed:30193097). kcat is 22 sec(-1) with GTP as substrate (for the enzyme purified from cells exposed to 15 mM glucose) (PubMed:30193097). kcat is 16 sec(-1) with GDP as substrate (for the enzyme purified from cells exposed to 10 mM glucose) (PubMed:30193097). kcat is 11 sec(-1) with GDP as substrate (for the enzyme purified from cells exposed to 15 mM glucose) (PubMed:30193097).</text>
    </kinetics>
</comment>
<comment type="pathway">
    <text evidence="12 13 14 15">Carbohydrate biosynthesis; gluconeogenesis.</text>
</comment>
<comment type="subunit">
    <text evidence="4 9">Monomer.</text>
</comment>
<comment type="subcellular location">
    <subcellularLocation>
        <location evidence="16">Cytoplasm</location>
        <location evidence="16">Cytosol</location>
    </subcellularLocation>
    <subcellularLocation>
        <location evidence="16">Endoplasmic reticulum</location>
    </subcellularLocation>
    <text evidence="16">Phosphorylation at Ser-90 promotes translocation to the endoplasmic reticulum.</text>
</comment>
<comment type="alternative products">
    <event type="alternative splicing"/>
    <isoform>
        <id>P35558-1</id>
        <name>1</name>
        <sequence type="displayed"/>
    </isoform>
    <isoform>
        <id>P35558-2</id>
        <name>2</name>
        <sequence type="described" ref="VSP_057073 VSP_057074"/>
    </isoform>
</comment>
<comment type="tissue specificity">
    <text evidence="18">Major sites of expression are liver, kidney and adipocytes.</text>
</comment>
<comment type="induction">
    <text evidence="8">Regulated by cAMP and insulin.</text>
</comment>
<comment type="PTM">
    <text evidence="10 11 15">Acetylated. Lysine acetylation by p300/EP300 is increased on high glucose conditions (PubMed:20167786, PubMed:21726808, PubMed:30193097). Lysine acetylation promotes ubiquitination by UBR5 (PubMed:21726808). Acetylation is enhanced in the presence of BAG6. Deacetylated by SIRT2. Deacetylation of Lys-91 is carried out by SIRT1 and depends on PCK1 phosphorylation levels (PubMed:30193097).</text>
</comment>
<comment type="PTM">
    <text evidence="15 16">Phosphorylated in a GSK3B-mediated pathway; phosphorylation affects the efficiency of SIRT1-mediated deacetylation, and regulates PCK1 ubiquitination and degradation (PubMed:30193097). Phosphorylation at Ser-90 by AKT1 reduces the binding affinity to oxaloacetate and promotes the protein kinase activity: phosphorylated PCK1 translocates to the endoplasmic reticulum, where it phosphorylates INSIG1 and INSIG2 (PubMed:32322062).</text>
</comment>
<comment type="PTM">
    <text evidence="11">Ubiquitination by UBR5 leads to proteasomal degradation.</text>
</comment>
<comment type="disease" evidence="12 13 14">
    <disease id="DI-01470">
        <name>Phosphoenolpyruvate carboxykinase deficiency, cytosolic</name>
        <acronym>PCKDC</acronym>
        <description>An autosomal recessive metabolic disorder characterized by impaired gluconeogenesis, hypoglycemia, hypotonia, hepatomegaly, hepatic dysfunction, failure to thrive, lactic acidosis, and elevated tricarboxylic acid intermediates, particularly fumarate, in urine.</description>
        <dbReference type="MIM" id="261680"/>
    </disease>
    <text>The disease is caused by variants affecting the gene represented in this entry.</text>
</comment>
<comment type="miscellaneous">
    <text evidence="24">In eukaryotes there are two isozymes: a cytoplasmic one and a mitochondrial one.</text>
</comment>
<comment type="similarity">
    <text evidence="24">Belongs to the phosphoenolpyruvate carboxykinase [GTP] family.</text>
</comment>
<comment type="online information" name="Protein Spotlight">
    <link uri="https://www.proteinspotlight.org/back_issues/233/"/>
    <text>On a tangent - Issue 233 of February 2021</text>
</comment>
<reference key="1">
    <citation type="journal article" date="1993" name="Hum. Mol. Genet.">
        <title>cDNA sequence and localization of polymorphic human cytosolic phosphoenolpyruvate carboxykinase gene (PCK1) to chromosome 20, band q13.31: PCK1 is not tightly linked to maturity-onset diabetes of the young.</title>
        <authorList>
            <person name="Stoffel M."/>
            <person name="Xiang K.S."/>
            <person name="Espinosa R. III"/>
            <person name="Cox N.J."/>
            <person name="le Beau M.M."/>
            <person name="Bell G.I."/>
        </authorList>
    </citation>
    <scope>NUCLEOTIDE SEQUENCE [MRNA] (ISOFORM 1)</scope>
    <scope>TISSUE SPECIFICITY</scope>
    <scope>VARIANTS LEU-184 AND ASP-586</scope>
</reference>
<reference key="2">
    <citation type="journal article" date="1993" name="Genomics">
        <title>Phosphoenolpyruvate carboxykinase (GTP): characterization of the human PCK1 gene and localization distal to MODY on chromosome 20.</title>
        <authorList>
            <person name="Ting C.-N."/>
            <person name="Burgess D.L."/>
            <person name="Chamberlain J.S."/>
            <person name="Keith T.P."/>
            <person name="Falls K."/>
            <person name="Meisler M.H."/>
        </authorList>
    </citation>
    <scope>NUCLEOTIDE SEQUENCE [GENOMIC DNA]</scope>
    <scope>VARIANT LEU-184</scope>
    <source>
        <tissue>Liver</tissue>
    </source>
</reference>
<reference key="3">
    <citation type="submission" date="2004-10" db="EMBL/GenBank/DDBJ databases">
        <authorList>
            <consortium name="NIEHS SNPs program"/>
        </authorList>
    </citation>
    <scope>NUCLEOTIDE SEQUENCE [GENOMIC DNA]</scope>
    <scope>VARIANTS GLN-55; THR-60; ILE-138; VAL-267; LYS-276; ILE-368 AND SER-427</scope>
</reference>
<reference key="4">
    <citation type="journal article" date="2004" name="Nat. Genet.">
        <title>Complete sequencing and characterization of 21,243 full-length human cDNAs.</title>
        <authorList>
            <person name="Ota T."/>
            <person name="Suzuki Y."/>
            <person name="Nishikawa T."/>
            <person name="Otsuki T."/>
            <person name="Sugiyama T."/>
            <person name="Irie R."/>
            <person name="Wakamatsu A."/>
            <person name="Hayashi K."/>
            <person name="Sato H."/>
            <person name="Nagai K."/>
            <person name="Kimura K."/>
            <person name="Makita H."/>
            <person name="Sekine M."/>
            <person name="Obayashi M."/>
            <person name="Nishi T."/>
            <person name="Shibahara T."/>
            <person name="Tanaka T."/>
            <person name="Ishii S."/>
            <person name="Yamamoto J."/>
            <person name="Saito K."/>
            <person name="Kawai Y."/>
            <person name="Isono Y."/>
            <person name="Nakamura Y."/>
            <person name="Nagahari K."/>
            <person name="Murakami K."/>
            <person name="Yasuda T."/>
            <person name="Iwayanagi T."/>
            <person name="Wagatsuma M."/>
            <person name="Shiratori A."/>
            <person name="Sudo H."/>
            <person name="Hosoiri T."/>
            <person name="Kaku Y."/>
            <person name="Kodaira H."/>
            <person name="Kondo H."/>
            <person name="Sugawara M."/>
            <person name="Takahashi M."/>
            <person name="Kanda K."/>
            <person name="Yokoi T."/>
            <person name="Furuya T."/>
            <person name="Kikkawa E."/>
            <person name="Omura Y."/>
            <person name="Abe K."/>
            <person name="Kamihara K."/>
            <person name="Katsuta N."/>
            <person name="Sato K."/>
            <person name="Tanikawa M."/>
            <person name="Yamazaki M."/>
            <person name="Ninomiya K."/>
            <person name="Ishibashi T."/>
            <person name="Yamashita H."/>
            <person name="Murakawa K."/>
            <person name="Fujimori K."/>
            <person name="Tanai H."/>
            <person name="Kimata M."/>
            <person name="Watanabe M."/>
            <person name="Hiraoka S."/>
            <person name="Chiba Y."/>
            <person name="Ishida S."/>
            <person name="Ono Y."/>
            <person name="Takiguchi S."/>
            <person name="Watanabe S."/>
            <person name="Yosida M."/>
            <person name="Hotuta T."/>
            <person name="Kusano J."/>
            <person name="Kanehori K."/>
            <person name="Takahashi-Fujii A."/>
            <person name="Hara H."/>
            <person name="Tanase T.-O."/>
            <person name="Nomura Y."/>
            <person name="Togiya S."/>
            <person name="Komai F."/>
            <person name="Hara R."/>
            <person name="Takeuchi K."/>
            <person name="Arita M."/>
            <person name="Imose N."/>
            <person name="Musashino K."/>
            <person name="Yuuki H."/>
            <person name="Oshima A."/>
            <person name="Sasaki N."/>
            <person name="Aotsuka S."/>
            <person name="Yoshikawa Y."/>
            <person name="Matsunawa H."/>
            <person name="Ichihara T."/>
            <person name="Shiohata N."/>
            <person name="Sano S."/>
            <person name="Moriya S."/>
            <person name="Momiyama H."/>
            <person name="Satoh N."/>
            <person name="Takami S."/>
            <person name="Terashima Y."/>
            <person name="Suzuki O."/>
            <person name="Nakagawa S."/>
            <person name="Senoh A."/>
            <person name="Mizoguchi H."/>
            <person name="Goto Y."/>
            <person name="Shimizu F."/>
            <person name="Wakebe H."/>
            <person name="Hishigaki H."/>
            <person name="Watanabe T."/>
            <person name="Sugiyama A."/>
            <person name="Takemoto M."/>
            <person name="Kawakami B."/>
            <person name="Yamazaki M."/>
            <person name="Watanabe K."/>
            <person name="Kumagai A."/>
            <person name="Itakura S."/>
            <person name="Fukuzumi Y."/>
            <person name="Fujimori Y."/>
            <person name="Komiyama M."/>
            <person name="Tashiro H."/>
            <person name="Tanigami A."/>
            <person name="Fujiwara T."/>
            <person name="Ono T."/>
            <person name="Yamada K."/>
            <person name="Fujii Y."/>
            <person name="Ozaki K."/>
            <person name="Hirao M."/>
            <person name="Ohmori Y."/>
            <person name="Kawabata A."/>
            <person name="Hikiji T."/>
            <person name="Kobatake N."/>
            <person name="Inagaki H."/>
            <person name="Ikema Y."/>
            <person name="Okamoto S."/>
            <person name="Okitani R."/>
            <person name="Kawakami T."/>
            <person name="Noguchi S."/>
            <person name="Itoh T."/>
            <person name="Shigeta K."/>
            <person name="Senba T."/>
            <person name="Matsumura K."/>
            <person name="Nakajima Y."/>
            <person name="Mizuno T."/>
            <person name="Morinaga M."/>
            <person name="Sasaki M."/>
            <person name="Togashi T."/>
            <person name="Oyama M."/>
            <person name="Hata H."/>
            <person name="Watanabe M."/>
            <person name="Komatsu T."/>
            <person name="Mizushima-Sugano J."/>
            <person name="Satoh T."/>
            <person name="Shirai Y."/>
            <person name="Takahashi Y."/>
            <person name="Nakagawa K."/>
            <person name="Okumura K."/>
            <person name="Nagase T."/>
            <person name="Nomura N."/>
            <person name="Kikuchi H."/>
            <person name="Masuho Y."/>
            <person name="Yamashita R."/>
            <person name="Nakai K."/>
            <person name="Yada T."/>
            <person name="Nakamura Y."/>
            <person name="Ohara O."/>
            <person name="Isogai T."/>
            <person name="Sugano S."/>
        </authorList>
    </citation>
    <scope>NUCLEOTIDE SEQUENCE [LARGE SCALE MRNA] (ISOFORMS 1 AND 2)</scope>
    <scope>VARIANT LEU-184</scope>
    <source>
        <tissue>Kidney</tissue>
        <tissue>Pericardium</tissue>
    </source>
</reference>
<reference key="5">
    <citation type="journal article" date="2001" name="Nature">
        <title>The DNA sequence and comparative analysis of human chromosome 20.</title>
        <authorList>
            <person name="Deloukas P."/>
            <person name="Matthews L.H."/>
            <person name="Ashurst J.L."/>
            <person name="Burton J."/>
            <person name="Gilbert J.G.R."/>
            <person name="Jones M."/>
            <person name="Stavrides G."/>
            <person name="Almeida J.P."/>
            <person name="Babbage A.K."/>
            <person name="Bagguley C.L."/>
            <person name="Bailey J."/>
            <person name="Barlow K.F."/>
            <person name="Bates K.N."/>
            <person name="Beard L.M."/>
            <person name="Beare D.M."/>
            <person name="Beasley O.P."/>
            <person name="Bird C.P."/>
            <person name="Blakey S.E."/>
            <person name="Bridgeman A.M."/>
            <person name="Brown A.J."/>
            <person name="Buck D."/>
            <person name="Burrill W.D."/>
            <person name="Butler A.P."/>
            <person name="Carder C."/>
            <person name="Carter N.P."/>
            <person name="Chapman J.C."/>
            <person name="Clamp M."/>
            <person name="Clark G."/>
            <person name="Clark L.N."/>
            <person name="Clark S.Y."/>
            <person name="Clee C.M."/>
            <person name="Clegg S."/>
            <person name="Cobley V.E."/>
            <person name="Collier R.E."/>
            <person name="Connor R.E."/>
            <person name="Corby N.R."/>
            <person name="Coulson A."/>
            <person name="Coville G.J."/>
            <person name="Deadman R."/>
            <person name="Dhami P.D."/>
            <person name="Dunn M."/>
            <person name="Ellington A.G."/>
            <person name="Frankland J.A."/>
            <person name="Fraser A."/>
            <person name="French L."/>
            <person name="Garner P."/>
            <person name="Grafham D.V."/>
            <person name="Griffiths C."/>
            <person name="Griffiths M.N.D."/>
            <person name="Gwilliam R."/>
            <person name="Hall R.E."/>
            <person name="Hammond S."/>
            <person name="Harley J.L."/>
            <person name="Heath P.D."/>
            <person name="Ho S."/>
            <person name="Holden J.L."/>
            <person name="Howden P.J."/>
            <person name="Huckle E."/>
            <person name="Hunt A.R."/>
            <person name="Hunt S.E."/>
            <person name="Jekosch K."/>
            <person name="Johnson C.M."/>
            <person name="Johnson D."/>
            <person name="Kay M.P."/>
            <person name="Kimberley A.M."/>
            <person name="King A."/>
            <person name="Knights A."/>
            <person name="Laird G.K."/>
            <person name="Lawlor S."/>
            <person name="Lehvaeslaiho M.H."/>
            <person name="Leversha M.A."/>
            <person name="Lloyd C."/>
            <person name="Lloyd D.M."/>
            <person name="Lovell J.D."/>
            <person name="Marsh V.L."/>
            <person name="Martin S.L."/>
            <person name="McConnachie L.J."/>
            <person name="McLay K."/>
            <person name="McMurray A.A."/>
            <person name="Milne S.A."/>
            <person name="Mistry D."/>
            <person name="Moore M.J.F."/>
            <person name="Mullikin J.C."/>
            <person name="Nickerson T."/>
            <person name="Oliver K."/>
            <person name="Parker A."/>
            <person name="Patel R."/>
            <person name="Pearce T.A.V."/>
            <person name="Peck A.I."/>
            <person name="Phillimore B.J.C.T."/>
            <person name="Prathalingam S.R."/>
            <person name="Plumb R.W."/>
            <person name="Ramsay H."/>
            <person name="Rice C.M."/>
            <person name="Ross M.T."/>
            <person name="Scott C.E."/>
            <person name="Sehra H.K."/>
            <person name="Shownkeen R."/>
            <person name="Sims S."/>
            <person name="Skuce C.D."/>
            <person name="Smith M.L."/>
            <person name="Soderlund C."/>
            <person name="Steward C.A."/>
            <person name="Sulston J.E."/>
            <person name="Swann R.M."/>
            <person name="Sycamore N."/>
            <person name="Taylor R."/>
            <person name="Tee L."/>
            <person name="Thomas D.W."/>
            <person name="Thorpe A."/>
            <person name="Tracey A."/>
            <person name="Tromans A.C."/>
            <person name="Vaudin M."/>
            <person name="Wall M."/>
            <person name="Wallis J.M."/>
            <person name="Whitehead S.L."/>
            <person name="Whittaker P."/>
            <person name="Willey D.L."/>
            <person name="Williams L."/>
            <person name="Williams S.A."/>
            <person name="Wilming L."/>
            <person name="Wray P.W."/>
            <person name="Hubbard T."/>
            <person name="Durbin R.M."/>
            <person name="Bentley D.R."/>
            <person name="Beck S."/>
            <person name="Rogers J."/>
        </authorList>
    </citation>
    <scope>NUCLEOTIDE SEQUENCE [LARGE SCALE GENOMIC DNA]</scope>
</reference>
<reference key="6">
    <citation type="submission" date="2005-09" db="EMBL/GenBank/DDBJ databases">
        <authorList>
            <person name="Mural R.J."/>
            <person name="Istrail S."/>
            <person name="Sutton G.G."/>
            <person name="Florea L."/>
            <person name="Halpern A.L."/>
            <person name="Mobarry C.M."/>
            <person name="Lippert R."/>
            <person name="Walenz B."/>
            <person name="Shatkay H."/>
            <person name="Dew I."/>
            <person name="Miller J.R."/>
            <person name="Flanigan M.J."/>
            <person name="Edwards N.J."/>
            <person name="Bolanos R."/>
            <person name="Fasulo D."/>
            <person name="Halldorsson B.V."/>
            <person name="Hannenhalli S."/>
            <person name="Turner R."/>
            <person name="Yooseph S."/>
            <person name="Lu F."/>
            <person name="Nusskern D.R."/>
            <person name="Shue B.C."/>
            <person name="Zheng X.H."/>
            <person name="Zhong F."/>
            <person name="Delcher A.L."/>
            <person name="Huson D.H."/>
            <person name="Kravitz S.A."/>
            <person name="Mouchard L."/>
            <person name="Reinert K."/>
            <person name="Remington K.A."/>
            <person name="Clark A.G."/>
            <person name="Waterman M.S."/>
            <person name="Eichler E.E."/>
            <person name="Adams M.D."/>
            <person name="Hunkapiller M.W."/>
            <person name="Myers E.W."/>
            <person name="Venter J.C."/>
        </authorList>
    </citation>
    <scope>NUCLEOTIDE SEQUENCE [LARGE SCALE GENOMIC DNA]</scope>
    <scope>VARIANT LEU-184</scope>
</reference>
<reference key="7">
    <citation type="journal article" date="2004" name="Genome Res.">
        <title>The status, quality, and expansion of the NIH full-length cDNA project: the Mammalian Gene Collection (MGC).</title>
        <authorList>
            <consortium name="The MGC Project Team"/>
        </authorList>
    </citation>
    <scope>NUCLEOTIDE SEQUENCE [LARGE SCALE MRNA] (ISOFORM 1)</scope>
    <scope>VARIANTS LEU-184 AND VAL-267</scope>
    <source>
        <tissue>Kidney</tissue>
    </source>
</reference>
<reference key="8">
    <citation type="journal article" date="1995" name="Biochim. Biophys. Acta">
        <title>Structural and functional analysis of the human phosphoenolpyruvate carboxykinase gene promoter.</title>
        <authorList>
            <person name="O'Brien R.M."/>
            <person name="Printz R.L."/>
            <person name="Halmi N."/>
            <person name="Tiesinga J.J."/>
            <person name="Granner D.K."/>
        </authorList>
    </citation>
    <scope>NUCLEOTIDE SEQUENCE [GENOMIC DNA] OF 1-74</scope>
</reference>
<reference key="9">
    <citation type="journal article" date="1991" name="Mol. Cell. Biochem.">
        <title>Regulation of phosphoenolpyruvate carboxykinase (GTP) gene transcription.</title>
        <authorList>
            <person name="Liu J."/>
            <person name="Hanson R.W."/>
        </authorList>
    </citation>
    <scope>INDUCTION</scope>
</reference>
<reference key="10">
    <citation type="journal article" date="2010" name="Science">
        <title>Regulation of cellular metabolism by protein lysine acetylation.</title>
        <authorList>
            <person name="Zhao S."/>
            <person name="Xu W."/>
            <person name="Jiang W."/>
            <person name="Yu W."/>
            <person name="Lin Y."/>
            <person name="Zhang T."/>
            <person name="Yao J."/>
            <person name="Zhou L."/>
            <person name="Zeng Y."/>
            <person name="Li H."/>
            <person name="Li Y."/>
            <person name="Shi J."/>
            <person name="An W."/>
            <person name="Hancock S.M."/>
            <person name="He F."/>
            <person name="Qin L."/>
            <person name="Chin J."/>
            <person name="Yang P."/>
            <person name="Chen X."/>
            <person name="Lei Q."/>
            <person name="Xiong Y."/>
            <person name="Guan K.L."/>
        </authorList>
    </citation>
    <scope>ACETYLATION AT LYS-70; LYS-71 AND LYS-594</scope>
    <scope>ACTIVITY REGULATION</scope>
    <scope>MUTAGENESIS OF LYS-70; LYS-71 AND LYS-594</scope>
    <scope>IDENTIFICATION BY MASS SPECTROMETRY</scope>
</reference>
<reference key="11">
    <citation type="journal article" date="2011" name="Mol. Cell">
        <title>Acetylation regulates gluconeogenesis by promoting PEPCK1 degradation via recruiting the UBR5 ubiquitin ligase.</title>
        <authorList>
            <person name="Jiang W."/>
            <person name="Wang S."/>
            <person name="Xiao M."/>
            <person name="Lin Y."/>
            <person name="Zhou L."/>
            <person name="Lei Q."/>
            <person name="Xiong Y."/>
            <person name="Guan K.L."/>
            <person name="Zhao S."/>
        </authorList>
    </citation>
    <scope>ACETYLATION AT LYS-70; LYS-71 AND LYS-594</scope>
    <scope>DEACETYLATION BY SIRT2</scope>
    <scope>UBIQUITINATION BY UBR5</scope>
</reference>
<reference key="12">
    <citation type="journal article" date="2014" name="J. Proteomics">
        <title>An enzyme assisted RP-RPLC approach for in-depth analysis of human liver phosphoproteome.</title>
        <authorList>
            <person name="Bian Y."/>
            <person name="Song C."/>
            <person name="Cheng K."/>
            <person name="Dong M."/>
            <person name="Wang F."/>
            <person name="Huang J."/>
            <person name="Sun D."/>
            <person name="Wang L."/>
            <person name="Ye M."/>
            <person name="Zou H."/>
        </authorList>
    </citation>
    <scope>PHOSPHORYLATION [LARGE SCALE ANALYSIS] AT SER-19</scope>
    <scope>IDENTIFICATION BY MASS SPECTROMETRY [LARGE SCALE ANALYSIS]</scope>
    <source>
        <tissue>Liver</tissue>
    </source>
</reference>
<reference key="13">
    <citation type="journal article" date="2018" name="Mol. Cell">
        <title>Dynamic acetylation of phosphoenolpyruvate carboxykinase toggles enzyme activity between gluconeogenic and anaplerotic reactions.</title>
        <authorList>
            <person name="Latorre-Muro P."/>
            <person name="Baeza J."/>
            <person name="Armstrong E.A."/>
            <person name="Hurtado-Guerrero R."/>
            <person name="Corzana F."/>
            <person name="Wu L.E."/>
            <person name="Sinclair D.A."/>
            <person name="Lopez-Buesa P."/>
            <person name="Carrodeguas J.A."/>
            <person name="Denu J.M."/>
        </authorList>
    </citation>
    <scope>FUNCTION</scope>
    <scope>CATALYTIC ACTIVITY</scope>
    <scope>ACTIVITY REGULATION</scope>
    <scope>PATHWAY</scope>
    <scope>BIOPHYSICOCHEMICAL PROPERTIES</scope>
    <scope>ACETYLATION AT LYS-91 BY P300/EP300</scope>
    <scope>PHOSPHORYLATION</scope>
    <scope>DEACETYLATION BY SIRT1</scope>
</reference>
<reference key="14">
    <citation type="journal article" date="2020" name="Nature">
        <title>The gluconeogenic enzyme PCK1 phosphorylates INSIG1/2 for lipogenesis.</title>
        <authorList>
            <person name="Xu D."/>
            <person name="Wang Z."/>
            <person name="Xia Y."/>
            <person name="Shao F."/>
            <person name="Xia W."/>
            <person name="Wei Y."/>
            <person name="Li X."/>
            <person name="Qian X."/>
            <person name="Lee J.H."/>
            <person name="Du L."/>
            <person name="Zheng Y."/>
            <person name="Lv G."/>
            <person name="Leu J.S."/>
            <person name="Wang H."/>
            <person name="Xing D."/>
            <person name="Liang T."/>
            <person name="Hung M.C."/>
            <person name="Lu Z."/>
        </authorList>
    </citation>
    <scope>FUNCTION</scope>
    <scope>CATALYTIC ACTIVITY</scope>
    <scope>BIOPHYSICOCHEMICAL PROPERTIES</scope>
    <scope>SUBCELLULAR LOCATION</scope>
    <scope>ACTIVITY REGULATION</scope>
    <scope>PHOSPHORYLATION AT SER-90</scope>
    <scope>MUTAGENESIS OF SER-90 AND CYS-288</scope>
</reference>
<reference key="15">
    <citation type="journal article" date="2002" name="J. Mol. Biol.">
        <title>Crystal structure of human cytosolic phosphoenolpyruvate carboxykinase reveals a new GTP-binding site.</title>
        <authorList>
            <person name="Dunten P."/>
            <person name="Belunis C."/>
            <person name="Crowther R."/>
            <person name="Hollfelder K."/>
            <person name="Kammlott U."/>
            <person name="Levin W."/>
            <person name="Michel H."/>
            <person name="Ramsey G.B."/>
            <person name="Swain A."/>
            <person name="Weber D."/>
            <person name="Wertheimer S.J."/>
        </authorList>
    </citation>
    <scope>X-RAY CRYSTALLOGRAPHY (1.85 ANGSTROMS) IN COMPLEX WITH GTP ANALOG; PEP AND MANGANESE</scope>
    <scope>GTP-BINDING SITE</scope>
    <scope>COFACTOR</scope>
    <scope>SUBUNIT</scope>
    <scope>ACTIVE SITE</scope>
</reference>
<reference key="16">
    <citation type="journal article" date="2003" name="Bioorg. Med. Chem. Lett.">
        <title>X-ray structures of two xanthine inhibitors bound to PEPCK and N-3 modifications of substituted 1,8-dibenzylxanthines.</title>
        <authorList>
            <person name="Foley L.H."/>
            <person name="Wang P."/>
            <person name="Dunten P."/>
            <person name="Ramsey G."/>
            <person name="Gubler M.L."/>
            <person name="Wertheimer S.J."/>
        </authorList>
    </citation>
    <scope>X-RAY CRYSTALLOGRAPHY (2.10 ANGSTROMS) IN COMPLEX WITH MANGANESE; GTP ANALOG AND PEP</scope>
    <scope>COFACTOR</scope>
</reference>
<reference key="17">
    <citation type="journal article" date="2007" name="Bioorg. Med. Chem. Lett.">
        <title>C-8 Modifications of 3-alkyl-1,8-dibenzylxanthines as inhibitors of human cytosolic phosphoenolpyruvate carboxykinase.</title>
        <authorList>
            <person name="Pietranico S.L."/>
            <person name="Foley L.H."/>
            <person name="Huby N."/>
            <person name="Yun W."/>
            <person name="Dunten P."/>
            <person name="Vermeulen J."/>
            <person name="Wang P."/>
            <person name="Toth K."/>
            <person name="Ramsey G."/>
            <person name="Gubler M.L."/>
            <person name="Wertheimer S.J."/>
        </authorList>
    </citation>
    <scope>X-RAY CRYSTALLOGRAPHY (2.30 ANGSTROMS) IN COMPLEX WITH MANGANESE; GTP ANALOG AND PEP</scope>
    <scope>COFACTOR</scope>
    <scope>SUBUNIT</scope>
</reference>
<reference key="18">
    <citation type="journal article" date="2014" name="Mol. Genet. Metab.">
        <title>Three rare diseases in one sib pair: RAI1, PCK1, GRIN2B mutations associated with Smith-Magenis Syndrome, cytosolic PEPCK deficiency and NMDA receptor glutamate insensitivity.</title>
        <authorList>
            <person name="Adams D.R."/>
            <person name="Yuan H."/>
            <person name="Holyoak T."/>
            <person name="Arajs K.H."/>
            <person name="Hakimi P."/>
            <person name="Markello T.C."/>
            <person name="Wolfe L.A."/>
            <person name="Vilboux T."/>
            <person name="Burton B.K."/>
            <person name="Fajardo K.F."/>
            <person name="Grahame G."/>
            <person name="Holloman C."/>
            <person name="Sincan M."/>
            <person name="Smith A.C."/>
            <person name="Wells G.A."/>
            <person name="Huang Y."/>
            <person name="Vega H."/>
            <person name="Snyder J.P."/>
            <person name="Golas G.A."/>
            <person name="Tifft C.J."/>
            <person name="Boerkoel C.F."/>
            <person name="Hanson R.W."/>
            <person name="Traynelis S.F."/>
            <person name="Kerr D.S."/>
            <person name="Gahl W.A."/>
        </authorList>
    </citation>
    <scope>VARIANT PCKDC THR-45</scope>
    <scope>CHARACTERIZATION OF VARIANT PCKDC THR-45</scope>
    <scope>FUNCTION</scope>
    <scope>CATALYTIC ACTIVITY</scope>
    <scope>PATHWAY</scope>
</reference>
<reference key="19">
    <citation type="journal article" date="2016" name="Mol. Genet. Metab.">
        <title>Cytosolic phosphoenolpyruvate carboxykinase deficiency presenting with acute liver failure following gastroenteritis.</title>
        <authorList>
            <person name="Santra S."/>
            <person name="Cameron J.M."/>
            <person name="Shyr C."/>
            <person name="Zhang L."/>
            <person name="Droegemoeller B."/>
            <person name="Ross C.J."/>
            <person name="Wasserman W.W."/>
            <person name="Wevers R.A."/>
            <person name="Rodenburg R.J."/>
            <person name="Gupte G."/>
            <person name="Preece M.A."/>
            <person name="van Karnebeek C.D."/>
        </authorList>
    </citation>
    <scope>VARIANT PCKDC 440-GLY--LEU-443 DEL</scope>
    <scope>CHARACTERIZATION OF VARIANT PCKDC 440-GLY--LEU-443 DEL</scope>
    <scope>FUNCTION</scope>
    <scope>CATALYTIC ACTIVITY</scope>
    <scope>PATHWAY</scope>
</reference>
<reference key="20">
    <citation type="journal article" date="2017" name="Mol. Genet. Metab.">
        <title>Novel homozygous PCK1 mutation causing cytosolic phosphoenolpyruvate carboxykinase deficiency presenting as childhood hypoglycemia, an abnormal pattern of urine metabolites and liver dysfunction.</title>
        <authorList>
            <person name="Vieira P."/>
            <person name="Cameron J."/>
            <person name="Rahikkala E."/>
            <person name="Keski-Filppula R."/>
            <person name="Zhang L.H."/>
            <person name="Santra S."/>
            <person name="Matthews A."/>
            <person name="Myllynen P."/>
            <person name="Nuutinen M."/>
            <person name="Moilanen J.S."/>
            <person name="Rodenburg R.J."/>
            <person name="Rolfs A."/>
            <person name="Uusimaa J."/>
            <person name="van Karnebeek C.D."/>
        </authorList>
    </citation>
    <scope>VARIANT PCKDC ARG-309</scope>
    <scope>CHARACTERIZATION OF VARIANT PCKDC ARG-309</scope>
    <scope>FUNCTION</scope>
    <scope>CATALYTIC ACTIVITY</scope>
    <scope>PATHWAY</scope>
</reference>
<protein>
    <recommendedName>
        <fullName evidence="24">Phosphoenolpyruvate carboxykinase, cytosolic [GTP]</fullName>
        <shortName>PEPCK-C</shortName>
        <ecNumber evidence="12 13 14 15">4.1.1.32</ecNumber>
    </recommendedName>
    <alternativeName>
        <fullName evidence="24">Serine-protein kinase PCK1</fullName>
        <ecNumber evidence="16">2.7.11.-</ecNumber>
    </alternativeName>
</protein>
<keyword id="KW-0002">3D-structure</keyword>
<keyword id="KW-0007">Acetylation</keyword>
<keyword id="KW-0025">Alternative splicing</keyword>
<keyword id="KW-0963">Cytoplasm</keyword>
<keyword id="KW-0210">Decarboxylase</keyword>
<keyword id="KW-0256">Endoplasmic reticulum</keyword>
<keyword id="KW-0312">Gluconeogenesis</keyword>
<keyword id="KW-0342">GTP-binding</keyword>
<keyword id="KW-0418">Kinase</keyword>
<keyword id="KW-0456">Lyase</keyword>
<keyword id="KW-0464">Manganese</keyword>
<keyword id="KW-0479">Metal-binding</keyword>
<keyword id="KW-0547">Nucleotide-binding</keyword>
<keyword id="KW-0597">Phosphoprotein</keyword>
<keyword id="KW-1267">Proteomics identification</keyword>
<keyword id="KW-1185">Reference proteome</keyword>
<keyword id="KW-0808">Transferase</keyword>
<keyword id="KW-0832">Ubl conjugation</keyword>
<sequence length="622" mass="69195">MPPQLQNGLNLSAKVVQGSLDSLPQAVREFLENNAELCQPDHIHICDGSEEENGRLLGQMEEEGILRRLKKYDNCWLALTDPRDVARIESKTVIVTQEQRDTVPIPKTGLSQLGRWMSEEDFEKAFNARFPGCMKGRTMYVIPFSMGPLGSPLSKIGIELTDSPYVVASMRIMTRMGTPVLEAVGDGEFVKCLHSVGCPLPLQKPLVNNWPCNPELTLIAHLPDRREIISFGSGYGGNSLLGKKCFALRMASRLAKEEGWLAEHMLILGITNPEGEKKYLAAAFPSACGKTNLAMMNPSLPGWKVECVGDDIAWMKFDAQGHLRAINPENGFFGVAPGTSVKTNPNAIKTIQKNTIFTNVAETSDGGVYWEGIDEPLASGVTITSWKNKEWSSEDGEPCAHPNSRFCTPASQCPIIDAAWESPEGVPIEGIIFGGRRPAGVPLVYEALSWQHGVFVGAAMRSEATAAAEHKGKIIMHDPFAMRPFFGYNFGKYLAHWLSMAQHPAAKLPKIFHVNWFRKDKEGKFLWPGFGENSRVLEWMFNRIDGKASTKLTPIGYIPKEDALNLKGLGHINMMELFSISKEFWEKEVEDIEKYLEDQVNADLPCEIEREILALKQRISQM</sequence>
<evidence type="ECO:0000250" key="1">
    <source>
        <dbReference type="UniProtKB" id="P07379"/>
    </source>
</evidence>
<evidence type="ECO:0000250" key="2">
    <source>
        <dbReference type="UniProtKB" id="Q16822"/>
    </source>
</evidence>
<evidence type="ECO:0000250" key="3">
    <source>
        <dbReference type="UniProtKB" id="Q9Z2V4"/>
    </source>
</evidence>
<evidence type="ECO:0000269" key="4">
    <source>
    </source>
</evidence>
<evidence type="ECO:0000269" key="5">
    <source>
    </source>
</evidence>
<evidence type="ECO:0000269" key="6">
    <source>
    </source>
</evidence>
<evidence type="ECO:0000269" key="7">
    <source>
    </source>
</evidence>
<evidence type="ECO:0000269" key="8">
    <source>
    </source>
</evidence>
<evidence type="ECO:0000269" key="9">
    <source>
    </source>
</evidence>
<evidence type="ECO:0000269" key="10">
    <source>
    </source>
</evidence>
<evidence type="ECO:0000269" key="11">
    <source>
    </source>
</evidence>
<evidence type="ECO:0000269" key="12">
    <source>
    </source>
</evidence>
<evidence type="ECO:0000269" key="13">
    <source>
    </source>
</evidence>
<evidence type="ECO:0000269" key="14">
    <source>
    </source>
</evidence>
<evidence type="ECO:0000269" key="15">
    <source>
    </source>
</evidence>
<evidence type="ECO:0000269" key="16">
    <source>
    </source>
</evidence>
<evidence type="ECO:0000269" key="17">
    <source>
    </source>
</evidence>
<evidence type="ECO:0000269" key="18">
    <source>
    </source>
</evidence>
<evidence type="ECO:0000269" key="19">
    <source ref="3"/>
</evidence>
<evidence type="ECO:0000269" key="20">
    <source ref="6"/>
</evidence>
<evidence type="ECO:0000303" key="21">
    <source>
    </source>
</evidence>
<evidence type="ECO:0000303" key="22">
    <source>
    </source>
</evidence>
<evidence type="ECO:0000303" key="23">
    <source>
    </source>
</evidence>
<evidence type="ECO:0000305" key="24"/>
<evidence type="ECO:0000305" key="25">
    <source>
    </source>
</evidence>
<evidence type="ECO:0000312" key="26">
    <source>
        <dbReference type="HGNC" id="HGNC:8724"/>
    </source>
</evidence>
<evidence type="ECO:0007744" key="27">
    <source>
    </source>
</evidence>
<evidence type="ECO:0007829" key="28">
    <source>
        <dbReference type="PDB" id="1KHB"/>
    </source>
</evidence>
<evidence type="ECO:0007829" key="29">
    <source>
        <dbReference type="PDB" id="1KHF"/>
    </source>
</evidence>
<feature type="chain" id="PRO_0000103627" description="Phosphoenolpyruvate carboxykinase, cytosolic [GTP]">
    <location>
        <begin position="1"/>
        <end position="622"/>
    </location>
</feature>
<feature type="region of interest" description="Omega-loop" evidence="1">
    <location>
        <begin position="457"/>
        <end position="487"/>
    </location>
</feature>
<feature type="active site" evidence="4 25">
    <location>
        <position position="288"/>
    </location>
</feature>
<feature type="binding site" evidence="4 5 9">
    <location>
        <position position="87"/>
    </location>
    <ligand>
        <name>substrate</name>
    </ligand>
</feature>
<feature type="binding site" evidence="4 5 9">
    <location>
        <begin position="235"/>
        <end position="237"/>
    </location>
    <ligand>
        <name>substrate</name>
    </ligand>
</feature>
<feature type="binding site" evidence="4 5 9">
    <location>
        <position position="244"/>
    </location>
    <ligand>
        <name>Mn(2+)</name>
        <dbReference type="ChEBI" id="CHEBI:29035"/>
    </ligand>
</feature>
<feature type="binding site" evidence="4 5 9">
    <location>
        <position position="264"/>
    </location>
    <ligand>
        <name>Mn(2+)</name>
        <dbReference type="ChEBI" id="CHEBI:29035"/>
    </ligand>
</feature>
<feature type="binding site" evidence="1">
    <location>
        <position position="286"/>
    </location>
    <ligand>
        <name>substrate</name>
    </ligand>
</feature>
<feature type="binding site" evidence="4">
    <location>
        <begin position="287"/>
        <end position="292"/>
    </location>
    <ligand>
        <name>GTP</name>
        <dbReference type="ChEBI" id="CHEBI:37565"/>
    </ligand>
</feature>
<feature type="binding site" evidence="4 5 9">
    <location>
        <position position="311"/>
    </location>
    <ligand>
        <name>Mn(2+)</name>
        <dbReference type="ChEBI" id="CHEBI:29035"/>
    </ligand>
</feature>
<feature type="binding site" evidence="4 5 9">
    <location>
        <begin position="403"/>
        <end position="405"/>
    </location>
    <ligand>
        <name>substrate</name>
    </ligand>
</feature>
<feature type="binding site" evidence="4">
    <location>
        <position position="405"/>
    </location>
    <ligand>
        <name>GTP</name>
        <dbReference type="ChEBI" id="CHEBI:37565"/>
    </ligand>
</feature>
<feature type="binding site" evidence="4">
    <location>
        <position position="436"/>
    </location>
    <ligand>
        <name>GTP</name>
        <dbReference type="ChEBI" id="CHEBI:37565"/>
    </ligand>
</feature>
<feature type="binding site" evidence="4 5 9">
    <location>
        <begin position="530"/>
        <end position="533"/>
    </location>
    <ligand>
        <name>GTP</name>
        <dbReference type="ChEBI" id="CHEBI:37565"/>
    </ligand>
</feature>
<feature type="modified residue" description="Phosphoserine" evidence="27">
    <location>
        <position position="19"/>
    </location>
</feature>
<feature type="modified residue" description="N6-acetyllysine; by p300/EP300" evidence="10 11">
    <location>
        <position position="70"/>
    </location>
</feature>
<feature type="modified residue" description="N6-acetyllysine; by p300/EP300" evidence="10 11">
    <location>
        <position position="71"/>
    </location>
</feature>
<feature type="modified residue" description="Phosphoserine; by PKB/AKT1" evidence="16">
    <location>
        <position position="90"/>
    </location>
</feature>
<feature type="modified residue" description="N6-acetyllysine; by p300/EP300" evidence="15">
    <location>
        <position position="91"/>
    </location>
</feature>
<feature type="modified residue" description="Phosphoserine" evidence="3">
    <location>
        <position position="118"/>
    </location>
</feature>
<feature type="modified residue" description="Phosphothreonine" evidence="2">
    <location>
        <position position="178"/>
    </location>
</feature>
<feature type="modified residue" description="Phosphoserine" evidence="2">
    <location>
        <position position="286"/>
    </location>
</feature>
<feature type="modified residue" description="N6-acetyllysine" evidence="1">
    <location>
        <position position="473"/>
    </location>
</feature>
<feature type="modified residue" description="N6-acetyllysine" evidence="1">
    <location>
        <position position="521"/>
    </location>
</feature>
<feature type="modified residue" description="N6-acetyllysine" evidence="1">
    <location>
        <position position="524"/>
    </location>
</feature>
<feature type="modified residue" description="N6-acetyllysine; by p300/EP300" evidence="10 11">
    <location>
        <position position="594"/>
    </location>
</feature>
<feature type="splice variant" id="VSP_057073" description="In isoform 2." evidence="21">
    <original>MPP</original>
    <variation>MTT</variation>
    <location>
        <begin position="1"/>
        <end position="3"/>
    </location>
</feature>
<feature type="splice variant" id="VSP_057074" description="In isoform 2." evidence="21">
    <location>
        <begin position="4"/>
        <end position="320"/>
    </location>
</feature>
<feature type="sequence variant" id="VAR_079633" description="In PCKDC; decreased stability; no effect on phosphoenolpyruvate carboxykinase activity; dbSNP:rs202197769." evidence="12">
    <original>I</original>
    <variation>T</variation>
    <location>
        <position position="45"/>
    </location>
</feature>
<feature type="sequence variant" id="VAR_021072" description="In dbSNP:rs28383585." evidence="19">
    <original>R</original>
    <variation>Q</variation>
    <location>
        <position position="55"/>
    </location>
</feature>
<feature type="sequence variant" id="VAR_021073" description="In dbSNP:rs28383586." evidence="19">
    <original>M</original>
    <variation>T</variation>
    <location>
        <position position="60"/>
    </location>
</feature>
<feature type="sequence variant" id="VAR_021074" description="In dbSNP:rs28359542." evidence="19">
    <original>T</original>
    <variation>I</variation>
    <location>
        <position position="138"/>
    </location>
</feature>
<feature type="sequence variant" id="VAR_021075" description="In dbSNP:rs707555." evidence="6 7 17 18 20">
    <original>V</original>
    <variation>L</variation>
    <location>
        <position position="184"/>
    </location>
</feature>
<feature type="sequence variant" id="VAR_015575" description="In dbSNP:rs8192708." evidence="7 19">
    <original>I</original>
    <variation>V</variation>
    <location>
        <position position="267"/>
    </location>
</feature>
<feature type="sequence variant" id="VAR_021076" description="In dbSNP:rs11552145." evidence="19">
    <original>E</original>
    <variation>K</variation>
    <location>
        <position position="276"/>
    </location>
</feature>
<feature type="sequence variant" id="VAR_079634" description="In PCKDC; uncertain significance; decreased phosphoenolpyruvate carboxykinase activity; dbSNP:rs201186470." evidence="14">
    <original>G</original>
    <variation>R</variation>
    <location>
        <position position="309"/>
    </location>
</feature>
<feature type="sequence variant" id="VAR_021077" description="In dbSNP:rs1804160." evidence="19">
    <original>V</original>
    <variation>I</variation>
    <location>
        <position position="368"/>
    </location>
</feature>
<feature type="sequence variant" id="VAR_021078" description="In dbSNP:rs28359550." evidence="19">
    <original>P</original>
    <variation>S</variation>
    <location>
        <position position="427"/>
    </location>
</feature>
<feature type="sequence variant" id="VAR_079635" description="In PCKDC; decreased phosphoenolpyruvate carboxykinase activity." evidence="13">
    <location>
        <begin position="440"/>
        <end position="443"/>
    </location>
</feature>
<feature type="sequence variant" id="VAR_042444" description="In dbSNP:rs1042529." evidence="18">
    <original>E</original>
    <variation>D</variation>
    <location>
        <position position="586"/>
    </location>
</feature>
<feature type="mutagenesis site" description="Abolishes acetylation and increases protein stability; when associated with R-71 and R-594." evidence="10">
    <original>K</original>
    <variation>R</variation>
    <location>
        <position position="70"/>
    </location>
</feature>
<feature type="mutagenesis site" description="Abolishes acetylation and increases protein stability; when associated with R-70 and R-594." evidence="10">
    <original>K</original>
    <variation>R</variation>
    <location>
        <position position="71"/>
    </location>
</feature>
<feature type="mutagenesis site" description="Abolished phosphorylation by AKT1, interaction with INSIG proteins (INSIG1 and INSIG2) and ability to regulate lipogenesis." evidence="16">
    <original>S</original>
    <variation>A</variation>
    <location>
        <position position="90"/>
    </location>
</feature>
<feature type="mutagenesis site" description="Phosphomimetic mutant, promotes the serine protein kinase activity by reducing the binding affinity to oxaloacetate." evidence="16">
    <original>S</original>
    <variation>E</variation>
    <location>
        <position position="90"/>
    </location>
</feature>
<feature type="mutagenesis site" description="Abolished both phosphoenolpyruvate carboxykinase and protein kinase activities." evidence="16">
    <original>C</original>
    <variation>S</variation>
    <location>
        <position position="288"/>
    </location>
</feature>
<feature type="mutagenesis site" description="Abolishes acetylation and increases protein stability; when associated with R-70 and R-71." evidence="10">
    <original>K</original>
    <variation>R</variation>
    <location>
        <position position="594"/>
    </location>
</feature>
<feature type="sequence conflict" description="In Ref. 2; AAA02558." evidence="24" ref="2">
    <original>M</original>
    <variation>N</variation>
    <location>
        <position position="250"/>
    </location>
</feature>
<feature type="sequence conflict" description="In Ref. 1; AAA60084." evidence="24" ref="1">
    <original>K</original>
    <variation>E</variation>
    <location>
        <position position="256"/>
    </location>
</feature>
<feature type="sequence conflict" description="In Ref. 2; AAA02558." evidence="24" ref="2">
    <original>T</original>
    <variation>S</variation>
    <location>
        <position position="291"/>
    </location>
</feature>
<feature type="sequence conflict" description="In Ref. 1; AAA60084." evidence="24" ref="1">
    <original>KL</original>
    <variation>NV</variation>
    <location>
        <begin position="551"/>
        <end position="552"/>
    </location>
</feature>
<feature type="sequence conflict" description="In Ref. 1; AAA60084." evidence="24" ref="1">
    <original>E</original>
    <variation>V</variation>
    <location>
        <position position="597"/>
    </location>
</feature>
<feature type="helix" evidence="28">
    <location>
        <begin position="11"/>
        <end position="14"/>
    </location>
</feature>
<feature type="strand" evidence="28">
    <location>
        <begin position="15"/>
        <end position="18"/>
    </location>
</feature>
<feature type="helix" evidence="28">
    <location>
        <begin position="20"/>
        <end position="22"/>
    </location>
</feature>
<feature type="helix" evidence="28">
    <location>
        <begin position="25"/>
        <end position="38"/>
    </location>
</feature>
<feature type="strand" evidence="28">
    <location>
        <begin position="41"/>
        <end position="45"/>
    </location>
</feature>
<feature type="helix" evidence="28">
    <location>
        <begin position="50"/>
        <end position="62"/>
    </location>
</feature>
<feature type="strand" evidence="29">
    <location>
        <begin position="65"/>
        <end position="68"/>
    </location>
</feature>
<feature type="strand" evidence="28">
    <location>
        <begin position="72"/>
        <end position="74"/>
    </location>
</feature>
<feature type="strand" evidence="28">
    <location>
        <begin position="76"/>
        <end position="78"/>
    </location>
</feature>
<feature type="strand" evidence="28">
    <location>
        <begin position="84"/>
        <end position="86"/>
    </location>
</feature>
<feature type="helix" evidence="28">
    <location>
        <begin position="89"/>
        <end position="91"/>
    </location>
</feature>
<feature type="strand" evidence="28">
    <location>
        <begin position="92"/>
        <end position="95"/>
    </location>
</feature>
<feature type="helix" evidence="28">
    <location>
        <begin position="99"/>
        <end position="102"/>
    </location>
</feature>
<feature type="strand" evidence="28">
    <location>
        <begin position="107"/>
        <end position="109"/>
    </location>
</feature>
<feature type="helix" evidence="28">
    <location>
        <begin position="119"/>
        <end position="129"/>
    </location>
</feature>
<feature type="turn" evidence="28">
    <location>
        <begin position="131"/>
        <end position="136"/>
    </location>
</feature>
<feature type="strand" evidence="28">
    <location>
        <begin position="137"/>
        <end position="150"/>
    </location>
</feature>
<feature type="strand" evidence="28">
    <location>
        <begin position="155"/>
        <end position="162"/>
    </location>
</feature>
<feature type="helix" evidence="28">
    <location>
        <begin position="164"/>
        <end position="173"/>
    </location>
</feature>
<feature type="strand" evidence="28">
    <location>
        <begin position="174"/>
        <end position="177"/>
    </location>
</feature>
<feature type="helix" evidence="28">
    <location>
        <begin position="178"/>
        <end position="184"/>
    </location>
</feature>
<feature type="strand" evidence="28">
    <location>
        <begin position="190"/>
        <end position="195"/>
    </location>
</feature>
<feature type="helix" evidence="28">
    <location>
        <begin position="214"/>
        <end position="216"/>
    </location>
</feature>
<feature type="strand" evidence="28">
    <location>
        <begin position="218"/>
        <end position="222"/>
    </location>
</feature>
<feature type="helix" evidence="28">
    <location>
        <begin position="223"/>
        <end position="225"/>
    </location>
</feature>
<feature type="strand" evidence="28">
    <location>
        <begin position="227"/>
        <end position="232"/>
    </location>
</feature>
<feature type="helix" evidence="28">
    <location>
        <begin position="236"/>
        <end position="239"/>
    </location>
</feature>
<feature type="helix" evidence="28">
    <location>
        <begin position="242"/>
        <end position="248"/>
    </location>
</feature>
<feature type="helix" evidence="28">
    <location>
        <begin position="249"/>
        <end position="258"/>
    </location>
</feature>
<feature type="strand" evidence="28">
    <location>
        <begin position="261"/>
        <end position="264"/>
    </location>
</feature>
<feature type="strand" evidence="28">
    <location>
        <begin position="266"/>
        <end position="271"/>
    </location>
</feature>
<feature type="strand" evidence="28">
    <location>
        <begin position="277"/>
        <end position="283"/>
    </location>
</feature>
<feature type="helix" evidence="28">
    <location>
        <begin position="290"/>
        <end position="294"/>
    </location>
</feature>
<feature type="strand" evidence="28">
    <location>
        <begin position="304"/>
        <end position="311"/>
    </location>
</feature>
<feature type="strand" evidence="28">
    <location>
        <begin position="313"/>
        <end position="317"/>
    </location>
</feature>
<feature type="strand" evidence="28">
    <location>
        <begin position="321"/>
        <end position="326"/>
    </location>
</feature>
<feature type="strand" evidence="28">
    <location>
        <begin position="330"/>
        <end position="335"/>
    </location>
</feature>
<feature type="turn" evidence="28">
    <location>
        <begin position="341"/>
        <end position="343"/>
    </location>
</feature>
<feature type="helix" evidence="28">
    <location>
        <begin position="345"/>
        <end position="350"/>
    </location>
</feature>
<feature type="strand" evidence="28">
    <location>
        <begin position="356"/>
        <end position="359"/>
    </location>
</feature>
<feature type="strand" evidence="28">
    <location>
        <begin position="361"/>
        <end position="363"/>
    </location>
</feature>
<feature type="strand" evidence="28">
    <location>
        <begin position="388"/>
        <end position="391"/>
    </location>
</feature>
<feature type="strand" evidence="28">
    <location>
        <begin position="395"/>
        <end position="397"/>
    </location>
</feature>
<feature type="strand" evidence="28">
    <location>
        <begin position="405"/>
        <end position="409"/>
    </location>
</feature>
<feature type="helix" evidence="28">
    <location>
        <begin position="410"/>
        <end position="412"/>
    </location>
</feature>
<feature type="turn" evidence="28">
    <location>
        <begin position="418"/>
        <end position="421"/>
    </location>
</feature>
<feature type="strand" evidence="28">
    <location>
        <begin position="426"/>
        <end position="434"/>
    </location>
</feature>
<feature type="strand" evidence="28">
    <location>
        <begin position="438"/>
        <end position="440"/>
    </location>
</feature>
<feature type="strand" evidence="28">
    <location>
        <begin position="443"/>
        <end position="446"/>
    </location>
</feature>
<feature type="helix" evidence="28">
    <location>
        <begin position="450"/>
        <end position="458"/>
    </location>
</feature>
<feature type="strand" evidence="28">
    <location>
        <begin position="461"/>
        <end position="463"/>
    </location>
</feature>
<feature type="strand" evidence="28">
    <location>
        <begin position="475"/>
        <end position="477"/>
    </location>
</feature>
<feature type="helix" evidence="28">
    <location>
        <begin position="479"/>
        <end position="481"/>
    </location>
</feature>
<feature type="turn" evidence="28">
    <location>
        <begin position="483"/>
        <end position="485"/>
    </location>
</feature>
<feature type="helix" evidence="28">
    <location>
        <begin position="490"/>
        <end position="499"/>
    </location>
</feature>
<feature type="helix" evidence="28">
    <location>
        <begin position="500"/>
        <end position="502"/>
    </location>
</feature>
<feature type="strand" evidence="28">
    <location>
        <begin position="510"/>
        <end position="514"/>
    </location>
</feature>
<feature type="strand" evidence="28">
    <location>
        <begin position="525"/>
        <end position="527"/>
    </location>
</feature>
<feature type="helix" evidence="28">
    <location>
        <begin position="530"/>
        <end position="533"/>
    </location>
</feature>
<feature type="helix" evidence="28">
    <location>
        <begin position="534"/>
        <end position="544"/>
    </location>
</feature>
<feature type="strand" evidence="28">
    <location>
        <begin position="550"/>
        <end position="553"/>
    </location>
</feature>
<feature type="strand" evidence="28">
    <location>
        <begin position="556"/>
        <end position="559"/>
    </location>
</feature>
<feature type="turn" evidence="29">
    <location>
        <begin position="561"/>
        <end position="563"/>
    </location>
</feature>
<feature type="helix" evidence="28">
    <location>
        <begin position="574"/>
        <end position="577"/>
    </location>
</feature>
<feature type="helix" evidence="28">
    <location>
        <begin position="582"/>
        <end position="600"/>
    </location>
</feature>
<feature type="helix" evidence="28">
    <location>
        <begin position="601"/>
        <end position="603"/>
    </location>
</feature>
<feature type="helix" evidence="28">
    <location>
        <begin position="606"/>
        <end position="620"/>
    </location>
</feature>
<accession>P35558</accession>
<accession>A8K437</accession>
<accession>B4DT64</accession>
<accession>Q8TCA3</accession>
<accession>Q9UJD2</accession>
<dbReference type="EC" id="4.1.1.32" evidence="12 13 14 15"/>
<dbReference type="EC" id="2.7.11.-" evidence="16"/>
<dbReference type="EMBL" id="L05144">
    <property type="protein sequence ID" value="AAA60084.1"/>
    <property type="molecule type" value="mRNA"/>
</dbReference>
<dbReference type="EMBL" id="L12760">
    <property type="protein sequence ID" value="AAA02558.1"/>
    <property type="molecule type" value="Genomic_DNA"/>
</dbReference>
<dbReference type="EMBL" id="AY794987">
    <property type="protein sequence ID" value="AAV50001.1"/>
    <property type="molecule type" value="Genomic_DNA"/>
</dbReference>
<dbReference type="EMBL" id="AK290802">
    <property type="protein sequence ID" value="BAF83491.1"/>
    <property type="molecule type" value="mRNA"/>
</dbReference>
<dbReference type="EMBL" id="AK300072">
    <property type="protein sequence ID" value="BAG61876.1"/>
    <property type="molecule type" value="mRNA"/>
</dbReference>
<dbReference type="EMBL" id="AL035541">
    <property type="status" value="NOT_ANNOTATED_CDS"/>
    <property type="molecule type" value="Genomic_DNA"/>
</dbReference>
<dbReference type="EMBL" id="CH471077">
    <property type="protein sequence ID" value="EAW75514.1"/>
    <property type="molecule type" value="Genomic_DNA"/>
</dbReference>
<dbReference type="EMBL" id="BC023978">
    <property type="protein sequence ID" value="AAH23978.1"/>
    <property type="molecule type" value="mRNA"/>
</dbReference>
<dbReference type="EMBL" id="U31519">
    <property type="protein sequence ID" value="AAA91026.1"/>
    <property type="molecule type" value="Genomic_DNA"/>
</dbReference>
<dbReference type="CCDS" id="CCDS13460.1">
    <molecule id="P35558-1"/>
</dbReference>
<dbReference type="PIR" id="A45746">
    <property type="entry name" value="A45746"/>
</dbReference>
<dbReference type="RefSeq" id="NP_002582.3">
    <molecule id="P35558-1"/>
    <property type="nucleotide sequence ID" value="NM_002591.3"/>
</dbReference>
<dbReference type="PDB" id="1KHB">
    <property type="method" value="X-ray"/>
    <property type="resolution" value="1.85 A"/>
    <property type="chains" value="A=1-622"/>
</dbReference>
<dbReference type="PDB" id="1KHE">
    <property type="method" value="X-ray"/>
    <property type="resolution" value="2.40 A"/>
    <property type="chains" value="A=1-622"/>
</dbReference>
<dbReference type="PDB" id="1KHF">
    <property type="method" value="X-ray"/>
    <property type="resolution" value="2.02 A"/>
    <property type="chains" value="A=1-622"/>
</dbReference>
<dbReference type="PDB" id="1KHG">
    <property type="method" value="X-ray"/>
    <property type="resolution" value="2.34 A"/>
    <property type="chains" value="A=1-622"/>
</dbReference>
<dbReference type="PDB" id="1M51">
    <property type="method" value="X-ray"/>
    <property type="resolution" value="2.25 A"/>
    <property type="chains" value="A=1-622"/>
</dbReference>
<dbReference type="PDB" id="1NHX">
    <property type="method" value="X-ray"/>
    <property type="resolution" value="2.10 A"/>
    <property type="chains" value="A=1-622"/>
</dbReference>
<dbReference type="PDB" id="2GMV">
    <property type="method" value="X-ray"/>
    <property type="resolution" value="2.30 A"/>
    <property type="chains" value="A/B=1-622"/>
</dbReference>
<dbReference type="PDBsum" id="1KHB"/>
<dbReference type="PDBsum" id="1KHE"/>
<dbReference type="PDBsum" id="1KHF"/>
<dbReference type="PDBsum" id="1KHG"/>
<dbReference type="PDBsum" id="1M51"/>
<dbReference type="PDBsum" id="1NHX"/>
<dbReference type="PDBsum" id="2GMV"/>
<dbReference type="SMR" id="P35558"/>
<dbReference type="BioGRID" id="111136">
    <property type="interactions" value="137"/>
</dbReference>
<dbReference type="FunCoup" id="P35558">
    <property type="interactions" value="1246"/>
</dbReference>
<dbReference type="IntAct" id="P35558">
    <property type="interactions" value="36"/>
</dbReference>
<dbReference type="MINT" id="P35558"/>
<dbReference type="STRING" id="9606.ENSP00000319814"/>
<dbReference type="BindingDB" id="P35558"/>
<dbReference type="ChEMBL" id="CHEMBL2911"/>
<dbReference type="DrugBank" id="DB02008">
    <property type="generic name" value="1-(2-Fluorobenzyl)-3-Butyl-8-(N-Acetyl-4-Aminobenzyl)-Xanthine"/>
</dbReference>
<dbReference type="DrugBank" id="DB03267">
    <property type="generic name" value="1-Allyl-3-Butyl-8-(N-Acetyl-4-Aminobenzyl)-Xanthine"/>
</dbReference>
<dbReference type="DrugBank" id="DB03725">
    <property type="generic name" value="5'-Guanylylmethylenebisphosphonate"/>
</dbReference>
<dbReference type="DrugBank" id="DB00787">
    <property type="generic name" value="Acyclovir"/>
</dbReference>
<dbReference type="DrugBank" id="DB06757">
    <property type="generic name" value="Manganese cation"/>
</dbReference>
<dbReference type="DrugBank" id="DB09338">
    <property type="generic name" value="Mersalyl"/>
</dbReference>
<dbReference type="DrugBank" id="DB01819">
    <property type="generic name" value="Phosphoenolpyruvate"/>
</dbReference>
<dbReference type="GlyGen" id="P35558">
    <property type="glycosylation" value="1 site, 1 O-linked glycan (1 site)"/>
</dbReference>
<dbReference type="iPTMnet" id="P35558"/>
<dbReference type="PhosphoSitePlus" id="P35558"/>
<dbReference type="BioMuta" id="PCK1"/>
<dbReference type="DMDM" id="93138710"/>
<dbReference type="jPOST" id="P35558"/>
<dbReference type="MassIVE" id="P35558"/>
<dbReference type="PaxDb" id="9606-ENSP00000319814"/>
<dbReference type="PeptideAtlas" id="P35558"/>
<dbReference type="ProteomicsDB" id="5077"/>
<dbReference type="ProteomicsDB" id="55087">
    <molecule id="P35558-1"/>
</dbReference>
<dbReference type="Pumba" id="P35558"/>
<dbReference type="Antibodypedia" id="1643">
    <property type="antibodies" value="603 antibodies from 40 providers"/>
</dbReference>
<dbReference type="DNASU" id="5105"/>
<dbReference type="Ensembl" id="ENST00000319441.6">
    <molecule id="P35558-1"/>
    <property type="protein sequence ID" value="ENSP00000319814.4"/>
    <property type="gene ID" value="ENSG00000124253.11"/>
</dbReference>
<dbReference type="GeneID" id="5105"/>
<dbReference type="KEGG" id="hsa:5105"/>
<dbReference type="MANE-Select" id="ENST00000319441.6">
    <property type="protein sequence ID" value="ENSP00000319814.4"/>
    <property type="RefSeq nucleotide sequence ID" value="NM_002591.4"/>
    <property type="RefSeq protein sequence ID" value="NP_002582.3"/>
</dbReference>
<dbReference type="UCSC" id="uc002xyn.5">
    <molecule id="P35558-1"/>
    <property type="organism name" value="human"/>
</dbReference>
<dbReference type="AGR" id="HGNC:8724"/>
<dbReference type="CTD" id="5105"/>
<dbReference type="DisGeNET" id="5105"/>
<dbReference type="GeneCards" id="PCK1"/>
<dbReference type="HGNC" id="HGNC:8724">
    <property type="gene designation" value="PCK1"/>
</dbReference>
<dbReference type="HPA" id="ENSG00000124253">
    <property type="expression patterns" value="Tissue enhanced (kidney, liver)"/>
</dbReference>
<dbReference type="MalaCards" id="PCK1"/>
<dbReference type="MIM" id="261680">
    <property type="type" value="phenotype"/>
</dbReference>
<dbReference type="MIM" id="614168">
    <property type="type" value="gene"/>
</dbReference>
<dbReference type="neXtProt" id="NX_P35558"/>
<dbReference type="OpenTargets" id="ENSG00000124253"/>
<dbReference type="Orphanet" id="2880">
    <property type="disease" value="Phosphoenolpyruvate carboxykinase deficiency"/>
</dbReference>
<dbReference type="PharmGKB" id="PA33069"/>
<dbReference type="VEuPathDB" id="HostDB:ENSG00000124253"/>
<dbReference type="eggNOG" id="KOG3749">
    <property type="taxonomic scope" value="Eukaryota"/>
</dbReference>
<dbReference type="GeneTree" id="ENSGT00390000001912"/>
<dbReference type="HOGENOM" id="CLU_028872_1_1_1"/>
<dbReference type="InParanoid" id="P35558"/>
<dbReference type="OMA" id="GPTNNWV"/>
<dbReference type="OrthoDB" id="5841594at2759"/>
<dbReference type="PAN-GO" id="P35558">
    <property type="GO annotations" value="12 GO annotations based on evolutionary models"/>
</dbReference>
<dbReference type="PhylomeDB" id="P35558"/>
<dbReference type="TreeFam" id="TF314402"/>
<dbReference type="BioCyc" id="MetaCyc:HS04751-MONOMER"/>
<dbReference type="BRENDA" id="4.1.1.32">
    <property type="organism ID" value="2681"/>
</dbReference>
<dbReference type="PathwayCommons" id="P35558"/>
<dbReference type="Reactome" id="R-HSA-2161541">
    <property type="pathway name" value="Abacavir metabolism"/>
</dbReference>
<dbReference type="Reactome" id="R-HSA-381340">
    <property type="pathway name" value="Transcriptional regulation of white adipocyte differentiation"/>
</dbReference>
<dbReference type="Reactome" id="R-HSA-70263">
    <property type="pathway name" value="Gluconeogenesis"/>
</dbReference>
<dbReference type="Reactome" id="R-HSA-9615017">
    <property type="pathway name" value="FOXO-mediated transcription of oxidative stress, metabolic and neuronal genes"/>
</dbReference>
<dbReference type="Reactome" id="R-HSA-9632974">
    <property type="pathway name" value="NR1H2 &amp; NR1H3 regulate gene expression linked to gluconeogenesis"/>
</dbReference>
<dbReference type="SABIO-RK" id="P35558"/>
<dbReference type="SignaLink" id="P35558"/>
<dbReference type="SIGNOR" id="P35558"/>
<dbReference type="UniPathway" id="UPA00138"/>
<dbReference type="BioGRID-ORCS" id="5105">
    <property type="hits" value="15 hits in 1150 CRISPR screens"/>
</dbReference>
<dbReference type="ChiTaRS" id="PCK1">
    <property type="organism name" value="human"/>
</dbReference>
<dbReference type="EvolutionaryTrace" id="P35558"/>
<dbReference type="GeneWiki" id="PCK1"/>
<dbReference type="GenomeRNAi" id="5105"/>
<dbReference type="Pharos" id="P35558">
    <property type="development level" value="Tbio"/>
</dbReference>
<dbReference type="PRO" id="PR:P35558"/>
<dbReference type="Proteomes" id="UP000005640">
    <property type="component" value="Chromosome 20"/>
</dbReference>
<dbReference type="RNAct" id="P35558">
    <property type="molecule type" value="protein"/>
</dbReference>
<dbReference type="Bgee" id="ENSG00000124253">
    <property type="expression patterns" value="Expressed in jejunal mucosa and 145 other cell types or tissues"/>
</dbReference>
<dbReference type="GO" id="GO:0005737">
    <property type="term" value="C:cytoplasm"/>
    <property type="evidence" value="ECO:0000250"/>
    <property type="project" value="BHF-UCL"/>
</dbReference>
<dbReference type="GO" id="GO:0005829">
    <property type="term" value="C:cytosol"/>
    <property type="evidence" value="ECO:0000314"/>
    <property type="project" value="UniProtKB"/>
</dbReference>
<dbReference type="GO" id="GO:0005783">
    <property type="term" value="C:endoplasmic reticulum"/>
    <property type="evidence" value="ECO:0000314"/>
    <property type="project" value="UniProtKB"/>
</dbReference>
<dbReference type="GO" id="GO:0070062">
    <property type="term" value="C:extracellular exosome"/>
    <property type="evidence" value="ECO:0007005"/>
    <property type="project" value="UniProtKB"/>
</dbReference>
<dbReference type="GO" id="GO:0005739">
    <property type="term" value="C:mitochondrion"/>
    <property type="evidence" value="ECO:0000318"/>
    <property type="project" value="GO_Central"/>
</dbReference>
<dbReference type="GO" id="GO:0031406">
    <property type="term" value="F:carboxylic acid binding"/>
    <property type="evidence" value="ECO:0000314"/>
    <property type="project" value="BHF-UCL"/>
</dbReference>
<dbReference type="GO" id="GO:0005525">
    <property type="term" value="F:GTP binding"/>
    <property type="evidence" value="ECO:0000314"/>
    <property type="project" value="BHF-UCL"/>
</dbReference>
<dbReference type="GO" id="GO:0000287">
    <property type="term" value="F:magnesium ion binding"/>
    <property type="evidence" value="ECO:0000314"/>
    <property type="project" value="BHF-UCL"/>
</dbReference>
<dbReference type="GO" id="GO:0030145">
    <property type="term" value="F:manganese ion binding"/>
    <property type="evidence" value="ECO:0000314"/>
    <property type="project" value="BHF-UCL"/>
</dbReference>
<dbReference type="GO" id="GO:0004613">
    <property type="term" value="F:phosphoenolpyruvate carboxykinase (GTP) activity"/>
    <property type="evidence" value="ECO:0000314"/>
    <property type="project" value="UniProtKB"/>
</dbReference>
<dbReference type="GO" id="GO:0106264">
    <property type="term" value="F:protein serine kinase activity (using GTP as donor)"/>
    <property type="evidence" value="ECO:0000314"/>
    <property type="project" value="UniProtKB"/>
</dbReference>
<dbReference type="GO" id="GO:0071549">
    <property type="term" value="P:cellular response to dexamethasone stimulus"/>
    <property type="evidence" value="ECO:0000318"/>
    <property type="project" value="GO_Central"/>
</dbReference>
<dbReference type="GO" id="GO:0071333">
    <property type="term" value="P:cellular response to glucose stimulus"/>
    <property type="evidence" value="ECO:0000314"/>
    <property type="project" value="UniProtKB"/>
</dbReference>
<dbReference type="GO" id="GO:0032869">
    <property type="term" value="P:cellular response to insulin stimulus"/>
    <property type="evidence" value="ECO:0000314"/>
    <property type="project" value="UniProtKB"/>
</dbReference>
<dbReference type="GO" id="GO:0051365">
    <property type="term" value="P:cellular response to potassium ion starvation"/>
    <property type="evidence" value="ECO:0007669"/>
    <property type="project" value="Ensembl"/>
</dbReference>
<dbReference type="GO" id="GO:0006094">
    <property type="term" value="P:gluconeogenesis"/>
    <property type="evidence" value="ECO:0000314"/>
    <property type="project" value="UniProt"/>
</dbReference>
<dbReference type="GO" id="GO:0042593">
    <property type="term" value="P:glucose homeostasis"/>
    <property type="evidence" value="ECO:0000250"/>
    <property type="project" value="BHF-UCL"/>
</dbReference>
<dbReference type="GO" id="GO:0006006">
    <property type="term" value="P:glucose metabolic process"/>
    <property type="evidence" value="ECO:0000315"/>
    <property type="project" value="BHF-UCL"/>
</dbReference>
<dbReference type="GO" id="GO:0046166">
    <property type="term" value="P:glyceraldehyde-3-phosphate biosynthetic process"/>
    <property type="evidence" value="ECO:0007669"/>
    <property type="project" value="Ensembl"/>
</dbReference>
<dbReference type="GO" id="GO:0046327">
    <property type="term" value="P:glycerol biosynthetic process from pyruvate"/>
    <property type="evidence" value="ECO:0000250"/>
    <property type="project" value="BHF-UCL"/>
</dbReference>
<dbReference type="GO" id="GO:0070365">
    <property type="term" value="P:hepatocyte differentiation"/>
    <property type="evidence" value="ECO:0000318"/>
    <property type="project" value="GO_Central"/>
</dbReference>
<dbReference type="GO" id="GO:0006107">
    <property type="term" value="P:oxaloacetate metabolic process"/>
    <property type="evidence" value="ECO:0000314"/>
    <property type="project" value="UniProtKB"/>
</dbReference>
<dbReference type="GO" id="GO:0018105">
    <property type="term" value="P:peptidyl-serine phosphorylation"/>
    <property type="evidence" value="ECO:0000314"/>
    <property type="project" value="UniProtKB"/>
</dbReference>
<dbReference type="GO" id="GO:0046889">
    <property type="term" value="P:positive regulation of lipid biosynthetic process"/>
    <property type="evidence" value="ECO:0000314"/>
    <property type="project" value="UniProt"/>
</dbReference>
<dbReference type="GO" id="GO:0043382">
    <property type="term" value="P:positive regulation of memory T cell differentiation"/>
    <property type="evidence" value="ECO:0000250"/>
    <property type="project" value="UniProtKB"/>
</dbReference>
<dbReference type="GO" id="GO:0045944">
    <property type="term" value="P:positive regulation of transcription by RNA polymerase II"/>
    <property type="evidence" value="ECO:0007669"/>
    <property type="project" value="Ensembl"/>
</dbReference>
<dbReference type="GO" id="GO:0019543">
    <property type="term" value="P:propionate catabolic process"/>
    <property type="evidence" value="ECO:0000318"/>
    <property type="project" value="GO_Central"/>
</dbReference>
<dbReference type="GO" id="GO:0046890">
    <property type="term" value="P:regulation of lipid biosynthetic process"/>
    <property type="evidence" value="ECO:0000314"/>
    <property type="project" value="UniProtKB"/>
</dbReference>
<dbReference type="GO" id="GO:0009617">
    <property type="term" value="P:response to bacterium"/>
    <property type="evidence" value="ECO:0007669"/>
    <property type="project" value="Ensembl"/>
</dbReference>
<dbReference type="GO" id="GO:0032868">
    <property type="term" value="P:response to insulin"/>
    <property type="evidence" value="ECO:0000314"/>
    <property type="project" value="BHF-UCL"/>
</dbReference>
<dbReference type="GO" id="GO:0042594">
    <property type="term" value="P:response to starvation"/>
    <property type="evidence" value="ECO:0000318"/>
    <property type="project" value="GO_Central"/>
</dbReference>
<dbReference type="GO" id="GO:0072350">
    <property type="term" value="P:tricarboxylic acid metabolic process"/>
    <property type="evidence" value="ECO:0000314"/>
    <property type="project" value="UniProt"/>
</dbReference>
<dbReference type="CDD" id="cd00819">
    <property type="entry name" value="PEPCK_GTP"/>
    <property type="match status" value="1"/>
</dbReference>
<dbReference type="FunFam" id="3.90.228.20:FF:000005">
    <property type="entry name" value="Phosphoenolpyruvate carboxykinase [GTP], mitochondrial"/>
    <property type="match status" value="1"/>
</dbReference>
<dbReference type="FunFam" id="2.170.8.10:FF:000006">
    <property type="entry name" value="Phosphoenolpyruvate carboxykinase, cytosolic [GTP]"/>
    <property type="match status" value="1"/>
</dbReference>
<dbReference type="FunFam" id="3.40.449.10:FF:000003">
    <property type="entry name" value="Phosphoenolpyruvate carboxykinase, cytosolic [GTP]"/>
    <property type="match status" value="1"/>
</dbReference>
<dbReference type="Gene3D" id="3.90.228.20">
    <property type="match status" value="1"/>
</dbReference>
<dbReference type="Gene3D" id="3.40.449.10">
    <property type="entry name" value="Phosphoenolpyruvate Carboxykinase, domain 1"/>
    <property type="match status" value="1"/>
</dbReference>
<dbReference type="Gene3D" id="2.170.8.10">
    <property type="entry name" value="Phosphoenolpyruvate Carboxykinase, domain 2"/>
    <property type="match status" value="1"/>
</dbReference>
<dbReference type="HAMAP" id="MF_00452">
    <property type="entry name" value="PEPCK_GTP"/>
    <property type="match status" value="1"/>
</dbReference>
<dbReference type="InterPro" id="IPR018091">
    <property type="entry name" value="PEP_carboxykin_GTP_CS"/>
</dbReference>
<dbReference type="InterPro" id="IPR013035">
    <property type="entry name" value="PEP_carboxykinase_C"/>
</dbReference>
<dbReference type="InterPro" id="IPR008209">
    <property type="entry name" value="PEP_carboxykinase_GTP"/>
</dbReference>
<dbReference type="InterPro" id="IPR035077">
    <property type="entry name" value="PEP_carboxykinase_GTP_C"/>
</dbReference>
<dbReference type="InterPro" id="IPR035078">
    <property type="entry name" value="PEP_carboxykinase_GTP_N"/>
</dbReference>
<dbReference type="InterPro" id="IPR008210">
    <property type="entry name" value="PEP_carboxykinase_N"/>
</dbReference>
<dbReference type="NCBIfam" id="NF003253">
    <property type="entry name" value="PRK04210.1"/>
    <property type="match status" value="1"/>
</dbReference>
<dbReference type="PANTHER" id="PTHR11561">
    <property type="entry name" value="PHOSPHOENOLPYRUVATE CARBOXYKINASE"/>
    <property type="match status" value="1"/>
</dbReference>
<dbReference type="PANTHER" id="PTHR11561:SF18">
    <property type="entry name" value="PHOSPHOENOLPYRUVATE CARBOXYKINASE, CYTOSOLIC [GTP]"/>
    <property type="match status" value="1"/>
</dbReference>
<dbReference type="Pfam" id="PF00821">
    <property type="entry name" value="PEPCK_GTP"/>
    <property type="match status" value="1"/>
</dbReference>
<dbReference type="Pfam" id="PF17297">
    <property type="entry name" value="PEPCK_N"/>
    <property type="match status" value="1"/>
</dbReference>
<dbReference type="PIRSF" id="PIRSF001348">
    <property type="entry name" value="PEP_carboxykinase_GTP"/>
    <property type="match status" value="1"/>
</dbReference>
<dbReference type="SUPFAM" id="SSF68923">
    <property type="entry name" value="PEP carboxykinase N-terminal domain"/>
    <property type="match status" value="1"/>
</dbReference>
<dbReference type="SUPFAM" id="SSF53795">
    <property type="entry name" value="PEP carboxykinase-like"/>
    <property type="match status" value="1"/>
</dbReference>
<dbReference type="PROSITE" id="PS00505">
    <property type="entry name" value="PEPCK_GTP"/>
    <property type="match status" value="1"/>
</dbReference>
<proteinExistence type="evidence at protein level"/>